<dbReference type="EC" id="6.3.2.1" evidence="1"/>
<dbReference type="EMBL" id="CP000909">
    <property type="protein sequence ID" value="ABY35416.1"/>
    <property type="molecule type" value="Genomic_DNA"/>
</dbReference>
<dbReference type="RefSeq" id="WP_012258070.1">
    <property type="nucleotide sequence ID" value="NC_010175.1"/>
</dbReference>
<dbReference type="RefSeq" id="YP_001635805.1">
    <property type="nucleotide sequence ID" value="NC_010175.1"/>
</dbReference>
<dbReference type="SMR" id="A9WFR6"/>
<dbReference type="FunCoup" id="A9WFR6">
    <property type="interactions" value="502"/>
</dbReference>
<dbReference type="STRING" id="324602.Caur_2207"/>
<dbReference type="EnsemblBacteria" id="ABY35416">
    <property type="protein sequence ID" value="ABY35416"/>
    <property type="gene ID" value="Caur_2207"/>
</dbReference>
<dbReference type="KEGG" id="cau:Caur_2207"/>
<dbReference type="PATRIC" id="fig|324602.8.peg.2501"/>
<dbReference type="eggNOG" id="COG0414">
    <property type="taxonomic scope" value="Bacteria"/>
</dbReference>
<dbReference type="HOGENOM" id="CLU_047148_0_0_0"/>
<dbReference type="InParanoid" id="A9WFR6"/>
<dbReference type="UniPathway" id="UPA00028">
    <property type="reaction ID" value="UER00005"/>
</dbReference>
<dbReference type="Proteomes" id="UP000002008">
    <property type="component" value="Chromosome"/>
</dbReference>
<dbReference type="GO" id="GO:0005829">
    <property type="term" value="C:cytosol"/>
    <property type="evidence" value="ECO:0000318"/>
    <property type="project" value="GO_Central"/>
</dbReference>
<dbReference type="GO" id="GO:0005524">
    <property type="term" value="F:ATP binding"/>
    <property type="evidence" value="ECO:0007669"/>
    <property type="project" value="UniProtKB-KW"/>
</dbReference>
<dbReference type="GO" id="GO:0004592">
    <property type="term" value="F:pantoate-beta-alanine ligase activity"/>
    <property type="evidence" value="ECO:0000318"/>
    <property type="project" value="GO_Central"/>
</dbReference>
<dbReference type="GO" id="GO:0015940">
    <property type="term" value="P:pantothenate biosynthetic process"/>
    <property type="evidence" value="ECO:0000318"/>
    <property type="project" value="GO_Central"/>
</dbReference>
<dbReference type="CDD" id="cd00560">
    <property type="entry name" value="PanC"/>
    <property type="match status" value="1"/>
</dbReference>
<dbReference type="FunFam" id="3.30.1300.10:FF:000007">
    <property type="entry name" value="Pantothenate synthetase"/>
    <property type="match status" value="1"/>
</dbReference>
<dbReference type="FunFam" id="3.40.50.620:FF:000013">
    <property type="entry name" value="Pantothenate synthetase"/>
    <property type="match status" value="1"/>
</dbReference>
<dbReference type="Gene3D" id="3.40.50.620">
    <property type="entry name" value="HUPs"/>
    <property type="match status" value="1"/>
</dbReference>
<dbReference type="Gene3D" id="3.30.1300.10">
    <property type="entry name" value="Pantoate-beta-alanine ligase, C-terminal domain"/>
    <property type="match status" value="1"/>
</dbReference>
<dbReference type="HAMAP" id="MF_00158">
    <property type="entry name" value="PanC"/>
    <property type="match status" value="1"/>
</dbReference>
<dbReference type="InterPro" id="IPR004821">
    <property type="entry name" value="Cyt_trans-like"/>
</dbReference>
<dbReference type="InterPro" id="IPR003721">
    <property type="entry name" value="Pantoate_ligase"/>
</dbReference>
<dbReference type="InterPro" id="IPR042176">
    <property type="entry name" value="Pantoate_ligase_C"/>
</dbReference>
<dbReference type="InterPro" id="IPR014729">
    <property type="entry name" value="Rossmann-like_a/b/a_fold"/>
</dbReference>
<dbReference type="NCBIfam" id="TIGR00125">
    <property type="entry name" value="cyt_tran_rel"/>
    <property type="match status" value="1"/>
</dbReference>
<dbReference type="NCBIfam" id="TIGR00018">
    <property type="entry name" value="panC"/>
    <property type="match status" value="1"/>
</dbReference>
<dbReference type="PANTHER" id="PTHR21299">
    <property type="entry name" value="CYTIDYLATE KINASE/PANTOATE-BETA-ALANINE LIGASE"/>
    <property type="match status" value="1"/>
</dbReference>
<dbReference type="PANTHER" id="PTHR21299:SF1">
    <property type="entry name" value="PANTOATE--BETA-ALANINE LIGASE"/>
    <property type="match status" value="1"/>
</dbReference>
<dbReference type="Pfam" id="PF02569">
    <property type="entry name" value="Pantoate_ligase"/>
    <property type="match status" value="1"/>
</dbReference>
<dbReference type="SUPFAM" id="SSF52374">
    <property type="entry name" value="Nucleotidylyl transferase"/>
    <property type="match status" value="1"/>
</dbReference>
<name>PANC_CHLAA</name>
<gene>
    <name evidence="1" type="primary">panC</name>
    <name type="ordered locus">Caur_2207</name>
</gene>
<sequence>MKVLHTVAEFRQARAAFDVLGFVPTMGYLHQGHLALVEQARRECPAVAVSIFVNPTQFGPNEDYARYPRDTNRDLALLEAAGVDLVFIPSVEEMYPPGFGTYVIQPAADEVLEGAARPGHFRGVATVVCKLFNIVQPTKSYFGQKDAQQTVVVRQMVRDLNLPVEIVIVPTVREPDGLALSSRNVYLNAEQRAAAPVLYRALRTAAERYAAGERDAETLRAVMRSVLAGEPLARPDYVSVAHPLTLRELDRIGADGALLSMAVRFDQVRLIDNWLLEGEGK</sequence>
<feature type="chain" id="PRO_1000076851" description="Pantothenate synthetase">
    <location>
        <begin position="1"/>
        <end position="281"/>
    </location>
</feature>
<feature type="active site" description="Proton donor" evidence="1">
    <location>
        <position position="33"/>
    </location>
</feature>
<feature type="binding site" evidence="1">
    <location>
        <begin position="26"/>
        <end position="33"/>
    </location>
    <ligand>
        <name>ATP</name>
        <dbReference type="ChEBI" id="CHEBI:30616"/>
    </ligand>
</feature>
<feature type="binding site" evidence="1">
    <location>
        <position position="57"/>
    </location>
    <ligand>
        <name>(R)-pantoate</name>
        <dbReference type="ChEBI" id="CHEBI:15980"/>
    </ligand>
</feature>
<feature type="binding site" evidence="1">
    <location>
        <position position="57"/>
    </location>
    <ligand>
        <name>beta-alanine</name>
        <dbReference type="ChEBI" id="CHEBI:57966"/>
    </ligand>
</feature>
<feature type="binding site" evidence="1">
    <location>
        <begin position="143"/>
        <end position="146"/>
    </location>
    <ligand>
        <name>ATP</name>
        <dbReference type="ChEBI" id="CHEBI:30616"/>
    </ligand>
</feature>
<feature type="binding site" evidence="1">
    <location>
        <position position="149"/>
    </location>
    <ligand>
        <name>(R)-pantoate</name>
        <dbReference type="ChEBI" id="CHEBI:15980"/>
    </ligand>
</feature>
<feature type="binding site" evidence="1">
    <location>
        <position position="172"/>
    </location>
    <ligand>
        <name>ATP</name>
        <dbReference type="ChEBI" id="CHEBI:30616"/>
    </ligand>
</feature>
<feature type="binding site" evidence="1">
    <location>
        <begin position="180"/>
        <end position="183"/>
    </location>
    <ligand>
        <name>ATP</name>
        <dbReference type="ChEBI" id="CHEBI:30616"/>
    </ligand>
</feature>
<organism>
    <name type="scientific">Chloroflexus aurantiacus (strain ATCC 29366 / DSM 635 / J-10-fl)</name>
    <dbReference type="NCBI Taxonomy" id="324602"/>
    <lineage>
        <taxon>Bacteria</taxon>
        <taxon>Bacillati</taxon>
        <taxon>Chloroflexota</taxon>
        <taxon>Chloroflexia</taxon>
        <taxon>Chloroflexales</taxon>
        <taxon>Chloroflexineae</taxon>
        <taxon>Chloroflexaceae</taxon>
        <taxon>Chloroflexus</taxon>
    </lineage>
</organism>
<proteinExistence type="inferred from homology"/>
<comment type="function">
    <text evidence="1">Catalyzes the condensation of pantoate with beta-alanine in an ATP-dependent reaction via a pantoyl-adenylate intermediate.</text>
</comment>
<comment type="catalytic activity">
    <reaction evidence="1">
        <text>(R)-pantoate + beta-alanine + ATP = (R)-pantothenate + AMP + diphosphate + H(+)</text>
        <dbReference type="Rhea" id="RHEA:10912"/>
        <dbReference type="ChEBI" id="CHEBI:15378"/>
        <dbReference type="ChEBI" id="CHEBI:15980"/>
        <dbReference type="ChEBI" id="CHEBI:29032"/>
        <dbReference type="ChEBI" id="CHEBI:30616"/>
        <dbReference type="ChEBI" id="CHEBI:33019"/>
        <dbReference type="ChEBI" id="CHEBI:57966"/>
        <dbReference type="ChEBI" id="CHEBI:456215"/>
        <dbReference type="EC" id="6.3.2.1"/>
    </reaction>
</comment>
<comment type="pathway">
    <text evidence="1">Cofactor biosynthesis; (R)-pantothenate biosynthesis; (R)-pantothenate from (R)-pantoate and beta-alanine: step 1/1.</text>
</comment>
<comment type="subunit">
    <text evidence="1">Homodimer.</text>
</comment>
<comment type="subcellular location">
    <subcellularLocation>
        <location evidence="1">Cytoplasm</location>
    </subcellularLocation>
</comment>
<comment type="miscellaneous">
    <text evidence="1">The reaction proceeds by a bi uni uni bi ping pong mechanism.</text>
</comment>
<comment type="similarity">
    <text evidence="1">Belongs to the pantothenate synthetase family.</text>
</comment>
<evidence type="ECO:0000255" key="1">
    <source>
        <dbReference type="HAMAP-Rule" id="MF_00158"/>
    </source>
</evidence>
<accession>A9WFR6</accession>
<protein>
    <recommendedName>
        <fullName evidence="1">Pantothenate synthetase</fullName>
        <shortName evidence="1">PS</shortName>
        <ecNumber evidence="1">6.3.2.1</ecNumber>
    </recommendedName>
    <alternativeName>
        <fullName evidence="1">Pantoate--beta-alanine ligase</fullName>
    </alternativeName>
    <alternativeName>
        <fullName evidence="1">Pantoate-activating enzyme</fullName>
    </alternativeName>
</protein>
<keyword id="KW-0067">ATP-binding</keyword>
<keyword id="KW-0963">Cytoplasm</keyword>
<keyword id="KW-0436">Ligase</keyword>
<keyword id="KW-0547">Nucleotide-binding</keyword>
<keyword id="KW-0566">Pantothenate biosynthesis</keyword>
<keyword id="KW-1185">Reference proteome</keyword>
<reference key="1">
    <citation type="journal article" date="2011" name="BMC Genomics">
        <title>Complete genome sequence of the filamentous anoxygenic phototrophic bacterium Chloroflexus aurantiacus.</title>
        <authorList>
            <person name="Tang K.H."/>
            <person name="Barry K."/>
            <person name="Chertkov O."/>
            <person name="Dalin E."/>
            <person name="Han C.S."/>
            <person name="Hauser L.J."/>
            <person name="Honchak B.M."/>
            <person name="Karbach L.E."/>
            <person name="Land M.L."/>
            <person name="Lapidus A."/>
            <person name="Larimer F.W."/>
            <person name="Mikhailova N."/>
            <person name="Pitluck S."/>
            <person name="Pierson B.K."/>
            <person name="Blankenship R.E."/>
        </authorList>
    </citation>
    <scope>NUCLEOTIDE SEQUENCE [LARGE SCALE GENOMIC DNA]</scope>
    <source>
        <strain>ATCC 29366 / DSM 635 / J-10-fl</strain>
    </source>
</reference>